<feature type="chain" id="PRO_0000120849" description="Uracil phosphoribosyltransferase">
    <location>
        <begin position="1"/>
        <end position="210"/>
    </location>
</feature>
<feature type="binding site" evidence="1">
    <location>
        <position position="77"/>
    </location>
    <ligand>
        <name>5-phospho-alpha-D-ribose 1-diphosphate</name>
        <dbReference type="ChEBI" id="CHEBI:58017"/>
    </ligand>
</feature>
<feature type="binding site" evidence="1">
    <location>
        <position position="102"/>
    </location>
    <ligand>
        <name>5-phospho-alpha-D-ribose 1-diphosphate</name>
        <dbReference type="ChEBI" id="CHEBI:58017"/>
    </ligand>
</feature>
<feature type="binding site" evidence="1">
    <location>
        <begin position="129"/>
        <end position="137"/>
    </location>
    <ligand>
        <name>5-phospho-alpha-D-ribose 1-diphosphate</name>
        <dbReference type="ChEBI" id="CHEBI:58017"/>
    </ligand>
</feature>
<feature type="binding site" evidence="1">
    <location>
        <position position="195"/>
    </location>
    <ligand>
        <name>uracil</name>
        <dbReference type="ChEBI" id="CHEBI:17568"/>
    </ligand>
</feature>
<feature type="binding site" evidence="1">
    <location>
        <begin position="200"/>
        <end position="202"/>
    </location>
    <ligand>
        <name>uracil</name>
        <dbReference type="ChEBI" id="CHEBI:17568"/>
    </ligand>
</feature>
<feature type="binding site" evidence="1">
    <location>
        <position position="201"/>
    </location>
    <ligand>
        <name>5-phospho-alpha-D-ribose 1-diphosphate</name>
        <dbReference type="ChEBI" id="CHEBI:58017"/>
    </ligand>
</feature>
<evidence type="ECO:0000255" key="1">
    <source>
        <dbReference type="HAMAP-Rule" id="MF_01218"/>
    </source>
</evidence>
<protein>
    <recommendedName>
        <fullName evidence="1">Uracil phosphoribosyltransferase</fullName>
        <ecNumber evidence="1">2.4.2.9</ecNumber>
    </recommendedName>
    <alternativeName>
        <fullName evidence="1">UMP pyrophosphorylase</fullName>
    </alternativeName>
    <alternativeName>
        <fullName evidence="1">UPRTase</fullName>
    </alternativeName>
</protein>
<sequence length="210" mass="23421">MKNFIFNHPLISDKLSKMRDVNTGYNFFKQLLTEITTLMMYEVGKGYELEEISVTTPLATTKAHKLKHNFVIVPILRAGLGMVDGVHNVIPTARVGHIGLYRDEKTFQPVEYYSKFPQTMDDGHVIVLDPMLATGASVIKAISLVKNIQPKKPRSIKFMGLLGAPEGLKALNQAHPDVDVYLACLDEKLNDKNYIYPGLGDAGDRIFGTK</sequence>
<reference key="1">
    <citation type="journal article" date="2003" name="Microbiology">
        <title>The complete genome sequence of the avian pathogen Mycoplasma gallisepticum strain R(low).</title>
        <authorList>
            <person name="Papazisi L."/>
            <person name="Gorton T.S."/>
            <person name="Kutish G."/>
            <person name="Markham P.F."/>
            <person name="Browning G.F."/>
            <person name="Nguyen D.K."/>
            <person name="Swartzell S."/>
            <person name="Madan A."/>
            <person name="Mahairas G."/>
            <person name="Geary S.J."/>
        </authorList>
    </citation>
    <scope>NUCLEOTIDE SEQUENCE [LARGE SCALE GENOMIC DNA]</scope>
    <source>
        <strain>R(low / passage 15 / clone 2)</strain>
    </source>
</reference>
<dbReference type="EC" id="2.4.2.9" evidence="1"/>
<dbReference type="EMBL" id="AE015450">
    <property type="protein sequence ID" value="AAP56646.2"/>
    <property type="molecule type" value="Genomic_DNA"/>
</dbReference>
<dbReference type="SMR" id="Q7NBH2"/>
<dbReference type="KEGG" id="mga:MGA_1159"/>
<dbReference type="HOGENOM" id="CLU_067096_2_3_14"/>
<dbReference type="OrthoDB" id="9781675at2"/>
<dbReference type="UniPathway" id="UPA00574">
    <property type="reaction ID" value="UER00636"/>
</dbReference>
<dbReference type="Proteomes" id="UP000001418">
    <property type="component" value="Chromosome"/>
</dbReference>
<dbReference type="GO" id="GO:0005525">
    <property type="term" value="F:GTP binding"/>
    <property type="evidence" value="ECO:0007669"/>
    <property type="project" value="UniProtKB-KW"/>
</dbReference>
<dbReference type="GO" id="GO:0000287">
    <property type="term" value="F:magnesium ion binding"/>
    <property type="evidence" value="ECO:0007669"/>
    <property type="project" value="UniProtKB-UniRule"/>
</dbReference>
<dbReference type="GO" id="GO:0004845">
    <property type="term" value="F:uracil phosphoribosyltransferase activity"/>
    <property type="evidence" value="ECO:0007669"/>
    <property type="project" value="UniProtKB-UniRule"/>
</dbReference>
<dbReference type="GO" id="GO:0044206">
    <property type="term" value="P:UMP salvage"/>
    <property type="evidence" value="ECO:0007669"/>
    <property type="project" value="UniProtKB-UniRule"/>
</dbReference>
<dbReference type="GO" id="GO:0006223">
    <property type="term" value="P:uracil salvage"/>
    <property type="evidence" value="ECO:0007669"/>
    <property type="project" value="InterPro"/>
</dbReference>
<dbReference type="CDD" id="cd06223">
    <property type="entry name" value="PRTases_typeI"/>
    <property type="match status" value="1"/>
</dbReference>
<dbReference type="FunFam" id="3.40.50.2020:FF:000003">
    <property type="entry name" value="Uracil phosphoribosyltransferase"/>
    <property type="match status" value="1"/>
</dbReference>
<dbReference type="Gene3D" id="3.40.50.2020">
    <property type="match status" value="1"/>
</dbReference>
<dbReference type="HAMAP" id="MF_01218_B">
    <property type="entry name" value="Upp_B"/>
    <property type="match status" value="1"/>
</dbReference>
<dbReference type="InterPro" id="IPR000836">
    <property type="entry name" value="PRibTrfase_dom"/>
</dbReference>
<dbReference type="InterPro" id="IPR029057">
    <property type="entry name" value="PRTase-like"/>
</dbReference>
<dbReference type="InterPro" id="IPR034332">
    <property type="entry name" value="Upp_B"/>
</dbReference>
<dbReference type="InterPro" id="IPR050054">
    <property type="entry name" value="UPRTase/APRTase"/>
</dbReference>
<dbReference type="InterPro" id="IPR005765">
    <property type="entry name" value="Ura_phspho_trans"/>
</dbReference>
<dbReference type="NCBIfam" id="NF001097">
    <property type="entry name" value="PRK00129.1"/>
    <property type="match status" value="1"/>
</dbReference>
<dbReference type="NCBIfam" id="TIGR01091">
    <property type="entry name" value="upp"/>
    <property type="match status" value="1"/>
</dbReference>
<dbReference type="PANTHER" id="PTHR32315">
    <property type="entry name" value="ADENINE PHOSPHORIBOSYLTRANSFERASE"/>
    <property type="match status" value="1"/>
</dbReference>
<dbReference type="PANTHER" id="PTHR32315:SF4">
    <property type="entry name" value="URACIL PHOSPHORIBOSYLTRANSFERASE, CHLOROPLASTIC"/>
    <property type="match status" value="1"/>
</dbReference>
<dbReference type="Pfam" id="PF14681">
    <property type="entry name" value="UPRTase"/>
    <property type="match status" value="1"/>
</dbReference>
<dbReference type="SUPFAM" id="SSF53271">
    <property type="entry name" value="PRTase-like"/>
    <property type="match status" value="1"/>
</dbReference>
<proteinExistence type="inferred from homology"/>
<gene>
    <name evidence="1" type="primary">upp</name>
    <name type="ordered locus">MYCGA2960</name>
    <name type="ORF">MGA_1159</name>
</gene>
<name>UPP_MYCGA</name>
<organism>
    <name type="scientific">Mycoplasmoides gallisepticum (strain R(low / passage 15 / clone 2))</name>
    <name type="common">Mycoplasma gallisepticum</name>
    <dbReference type="NCBI Taxonomy" id="710127"/>
    <lineage>
        <taxon>Bacteria</taxon>
        <taxon>Bacillati</taxon>
        <taxon>Mycoplasmatota</taxon>
        <taxon>Mycoplasmoidales</taxon>
        <taxon>Mycoplasmoidaceae</taxon>
        <taxon>Mycoplasmoides</taxon>
    </lineage>
</organism>
<comment type="function">
    <text evidence="1">Catalyzes the conversion of uracil and 5-phospho-alpha-D-ribose 1-diphosphate (PRPP) to UMP and diphosphate.</text>
</comment>
<comment type="catalytic activity">
    <reaction evidence="1">
        <text>UMP + diphosphate = 5-phospho-alpha-D-ribose 1-diphosphate + uracil</text>
        <dbReference type="Rhea" id="RHEA:13017"/>
        <dbReference type="ChEBI" id="CHEBI:17568"/>
        <dbReference type="ChEBI" id="CHEBI:33019"/>
        <dbReference type="ChEBI" id="CHEBI:57865"/>
        <dbReference type="ChEBI" id="CHEBI:58017"/>
        <dbReference type="EC" id="2.4.2.9"/>
    </reaction>
</comment>
<comment type="cofactor">
    <cofactor evidence="1">
        <name>Mg(2+)</name>
        <dbReference type="ChEBI" id="CHEBI:18420"/>
    </cofactor>
    <text evidence="1">Binds 1 Mg(2+) ion per subunit. The magnesium is bound as Mg-PRPP.</text>
</comment>
<comment type="activity regulation">
    <text evidence="1">Allosterically activated by GTP.</text>
</comment>
<comment type="pathway">
    <text evidence="1">Pyrimidine metabolism; UMP biosynthesis via salvage pathway; UMP from uracil: step 1/1.</text>
</comment>
<comment type="similarity">
    <text evidence="1">Belongs to the UPRTase family.</text>
</comment>
<keyword id="KW-0021">Allosteric enzyme</keyword>
<keyword id="KW-0328">Glycosyltransferase</keyword>
<keyword id="KW-0342">GTP-binding</keyword>
<keyword id="KW-0460">Magnesium</keyword>
<keyword id="KW-0547">Nucleotide-binding</keyword>
<keyword id="KW-1185">Reference proteome</keyword>
<keyword id="KW-0808">Transferase</keyword>
<accession>Q7NBH2</accession>